<accession>A4FXG8</accession>
<sequence>MKDTVMAYLLENSIKFKGKPNPKAAMGKILGENPDLRSKVKEVNQVISEVVKEIETMSLEEQQAKLDELAPEGLGQKTERKRKEIELKNVKGNVVMRFAPNPSGPLHIGHARASVLNDFFTKKYNGKLVLRLEDTDAKRVLPEAYEMIQEDLKWLGVKVDEVIVQSERLETYYEYGRKLIEMGQAYVCDCDADEFRTLREQGTLCKCRDTIPEENLKLWEKMLAGELDNVAVRLKTDIAHKNPSIRDFPIFRIERTPHPKNGIKYHVYPLMNLSVTVDDHLLGMTHVLRGKDHIVNTEKQEYIYNYFGWEIPEYVHYGILKIEGPVLSTSKMHAGILSGEYSGWDDARLGTLRALRKRGIRPEALYKLMVEIGIKQADVRFAWENLYAANKDIIDKDARRFFFVESPKKLVISGADSRKIDLRMHPDRSELGNRELLFDGEIYVSDDLEAGKMYRLMELFNIVVEKVENDILYAKYDSDDFAIAKSNKASIIHWIPVKDSVPVTVIDENAEKIEGFAEKDFAVVKEDDFVQFERFGFVRIDEKVDNGYTCYLTHK</sequence>
<name>SYE_METM5</name>
<evidence type="ECO:0000255" key="1">
    <source>
        <dbReference type="HAMAP-Rule" id="MF_02076"/>
    </source>
</evidence>
<proteinExistence type="inferred from homology"/>
<gene>
    <name evidence="1" type="primary">gltX</name>
    <name type="ordered locus">MmarC5_0583</name>
</gene>
<reference key="1">
    <citation type="submission" date="2007-03" db="EMBL/GenBank/DDBJ databases">
        <title>Complete sequence of chromosome of Methanococcus maripaludis C5.</title>
        <authorList>
            <consortium name="US DOE Joint Genome Institute"/>
            <person name="Copeland A."/>
            <person name="Lucas S."/>
            <person name="Lapidus A."/>
            <person name="Barry K."/>
            <person name="Glavina del Rio T."/>
            <person name="Dalin E."/>
            <person name="Tice H."/>
            <person name="Pitluck S."/>
            <person name="Chertkov O."/>
            <person name="Brettin T."/>
            <person name="Bruce D."/>
            <person name="Han C."/>
            <person name="Detter J.C."/>
            <person name="Schmutz J."/>
            <person name="Larimer F."/>
            <person name="Land M."/>
            <person name="Hauser L."/>
            <person name="Kyrpides N."/>
            <person name="Mikhailova N."/>
            <person name="Sieprawska-Lupa M."/>
            <person name="Whitman W.B."/>
            <person name="Richardson P."/>
        </authorList>
    </citation>
    <scope>NUCLEOTIDE SEQUENCE [LARGE SCALE GENOMIC DNA]</scope>
    <source>
        <strain>C5 / ATCC BAA-1333</strain>
    </source>
</reference>
<organism>
    <name type="scientific">Methanococcus maripaludis (strain C5 / ATCC BAA-1333)</name>
    <dbReference type="NCBI Taxonomy" id="402880"/>
    <lineage>
        <taxon>Archaea</taxon>
        <taxon>Methanobacteriati</taxon>
        <taxon>Methanobacteriota</taxon>
        <taxon>Methanomada group</taxon>
        <taxon>Methanococci</taxon>
        <taxon>Methanococcales</taxon>
        <taxon>Methanococcaceae</taxon>
        <taxon>Methanococcus</taxon>
    </lineage>
</organism>
<keyword id="KW-0030">Aminoacyl-tRNA synthetase</keyword>
<keyword id="KW-0067">ATP-binding</keyword>
<keyword id="KW-0963">Cytoplasm</keyword>
<keyword id="KW-0436">Ligase</keyword>
<keyword id="KW-0547">Nucleotide-binding</keyword>
<keyword id="KW-0648">Protein biosynthesis</keyword>
<dbReference type="EC" id="6.1.1.17" evidence="1"/>
<dbReference type="EMBL" id="CP000609">
    <property type="protein sequence ID" value="ABO34897.1"/>
    <property type="molecule type" value="Genomic_DNA"/>
</dbReference>
<dbReference type="RefSeq" id="WP_011868351.1">
    <property type="nucleotide sequence ID" value="NC_009135.1"/>
</dbReference>
<dbReference type="SMR" id="A4FXG8"/>
<dbReference type="STRING" id="402880.MmarC5_0583"/>
<dbReference type="GeneID" id="4929286"/>
<dbReference type="KEGG" id="mmq:MmarC5_0583"/>
<dbReference type="eggNOG" id="arCOG04302">
    <property type="taxonomic scope" value="Archaea"/>
</dbReference>
<dbReference type="HOGENOM" id="CLU_001882_1_3_2"/>
<dbReference type="OrthoDB" id="10470at2157"/>
<dbReference type="Proteomes" id="UP000000253">
    <property type="component" value="Chromosome"/>
</dbReference>
<dbReference type="GO" id="GO:0005829">
    <property type="term" value="C:cytosol"/>
    <property type="evidence" value="ECO:0007669"/>
    <property type="project" value="TreeGrafter"/>
</dbReference>
<dbReference type="GO" id="GO:0032991">
    <property type="term" value="C:protein-containing complex"/>
    <property type="evidence" value="ECO:0007669"/>
    <property type="project" value="UniProtKB-ARBA"/>
</dbReference>
<dbReference type="GO" id="GO:0005524">
    <property type="term" value="F:ATP binding"/>
    <property type="evidence" value="ECO:0007669"/>
    <property type="project" value="UniProtKB-UniRule"/>
</dbReference>
<dbReference type="GO" id="GO:0004818">
    <property type="term" value="F:glutamate-tRNA ligase activity"/>
    <property type="evidence" value="ECO:0007669"/>
    <property type="project" value="UniProtKB-UniRule"/>
</dbReference>
<dbReference type="GO" id="GO:0043604">
    <property type="term" value="P:amide biosynthetic process"/>
    <property type="evidence" value="ECO:0007669"/>
    <property type="project" value="TreeGrafter"/>
</dbReference>
<dbReference type="GO" id="GO:0006424">
    <property type="term" value="P:glutamyl-tRNA aminoacylation"/>
    <property type="evidence" value="ECO:0007669"/>
    <property type="project" value="UniProtKB-UniRule"/>
</dbReference>
<dbReference type="CDD" id="cd09287">
    <property type="entry name" value="GluRS_non_core"/>
    <property type="match status" value="1"/>
</dbReference>
<dbReference type="Gene3D" id="2.40.240.100">
    <property type="match status" value="1"/>
</dbReference>
<dbReference type="Gene3D" id="3.40.50.620">
    <property type="entry name" value="HUPs"/>
    <property type="match status" value="1"/>
</dbReference>
<dbReference type="Gene3D" id="2.40.240.10">
    <property type="entry name" value="Ribosomal Protein L25, Chain P"/>
    <property type="match status" value="1"/>
</dbReference>
<dbReference type="HAMAP" id="MF_02076">
    <property type="entry name" value="Glu_tRNA_synth_type2"/>
    <property type="match status" value="1"/>
</dbReference>
<dbReference type="InterPro" id="IPR001412">
    <property type="entry name" value="aa-tRNA-synth_I_CS"/>
</dbReference>
<dbReference type="InterPro" id="IPR050132">
    <property type="entry name" value="Gln/Glu-tRNA_Ligase"/>
</dbReference>
<dbReference type="InterPro" id="IPR004526">
    <property type="entry name" value="Glu-tRNA-synth_arc/euk"/>
</dbReference>
<dbReference type="InterPro" id="IPR000924">
    <property type="entry name" value="Glu/Gln-tRNA-synth"/>
</dbReference>
<dbReference type="InterPro" id="IPR020058">
    <property type="entry name" value="Glu/Gln-tRNA-synth_Ib_cat-dom"/>
</dbReference>
<dbReference type="InterPro" id="IPR020059">
    <property type="entry name" value="Glu/Gln-tRNA-synth_Ib_codon-bd"/>
</dbReference>
<dbReference type="InterPro" id="IPR020056">
    <property type="entry name" value="Rbsml_bL25/Gln-tRNA_synth_N"/>
</dbReference>
<dbReference type="InterPro" id="IPR011035">
    <property type="entry name" value="Ribosomal_bL25/Gln-tRNA_synth"/>
</dbReference>
<dbReference type="InterPro" id="IPR014729">
    <property type="entry name" value="Rossmann-like_a/b/a_fold"/>
</dbReference>
<dbReference type="InterPro" id="IPR049437">
    <property type="entry name" value="tRNA-synt_1c_C2"/>
</dbReference>
<dbReference type="NCBIfam" id="TIGR00463">
    <property type="entry name" value="gltX_arch"/>
    <property type="match status" value="1"/>
</dbReference>
<dbReference type="NCBIfam" id="NF003169">
    <property type="entry name" value="PRK04156.1"/>
    <property type="match status" value="1"/>
</dbReference>
<dbReference type="PANTHER" id="PTHR43097:SF5">
    <property type="entry name" value="GLUTAMATE--TRNA LIGASE"/>
    <property type="match status" value="1"/>
</dbReference>
<dbReference type="PANTHER" id="PTHR43097">
    <property type="entry name" value="GLUTAMINE-TRNA LIGASE"/>
    <property type="match status" value="1"/>
</dbReference>
<dbReference type="Pfam" id="PF00749">
    <property type="entry name" value="tRNA-synt_1c"/>
    <property type="match status" value="1"/>
</dbReference>
<dbReference type="Pfam" id="PF03950">
    <property type="entry name" value="tRNA-synt_1c_C"/>
    <property type="match status" value="1"/>
</dbReference>
<dbReference type="Pfam" id="PF20974">
    <property type="entry name" value="tRNA-synt_1c_C2"/>
    <property type="match status" value="1"/>
</dbReference>
<dbReference type="PRINTS" id="PR00987">
    <property type="entry name" value="TRNASYNTHGLU"/>
</dbReference>
<dbReference type="SUPFAM" id="SSF52374">
    <property type="entry name" value="Nucleotidylyl transferase"/>
    <property type="match status" value="1"/>
</dbReference>
<dbReference type="SUPFAM" id="SSF50715">
    <property type="entry name" value="Ribosomal protein L25-like"/>
    <property type="match status" value="1"/>
</dbReference>
<dbReference type="PROSITE" id="PS00178">
    <property type="entry name" value="AA_TRNA_LIGASE_I"/>
    <property type="match status" value="1"/>
</dbReference>
<feature type="chain" id="PRO_0000331005" description="Glutamate--tRNA ligase">
    <location>
        <begin position="1"/>
        <end position="555"/>
    </location>
</feature>
<feature type="short sequence motif" description="'HIGH' region" evidence="1">
    <location>
        <begin position="100"/>
        <end position="110"/>
    </location>
</feature>
<protein>
    <recommendedName>
        <fullName evidence="1">Glutamate--tRNA ligase</fullName>
        <ecNumber evidence="1">6.1.1.17</ecNumber>
    </recommendedName>
    <alternativeName>
        <fullName evidence="1">Glutamyl-tRNA synthetase</fullName>
        <shortName evidence="1">GluRS</shortName>
    </alternativeName>
</protein>
<comment type="function">
    <text evidence="1">Catalyzes the attachment of glutamate to tRNA(Glu) in a two-step reaction: glutamate is first activated by ATP to form Glu-AMP and then transferred to the acceptor end of tRNA(Glu).</text>
</comment>
<comment type="catalytic activity">
    <reaction evidence="1">
        <text>tRNA(Glu) + L-glutamate + ATP = L-glutamyl-tRNA(Glu) + AMP + diphosphate</text>
        <dbReference type="Rhea" id="RHEA:23540"/>
        <dbReference type="Rhea" id="RHEA-COMP:9663"/>
        <dbReference type="Rhea" id="RHEA-COMP:9680"/>
        <dbReference type="ChEBI" id="CHEBI:29985"/>
        <dbReference type="ChEBI" id="CHEBI:30616"/>
        <dbReference type="ChEBI" id="CHEBI:33019"/>
        <dbReference type="ChEBI" id="CHEBI:78442"/>
        <dbReference type="ChEBI" id="CHEBI:78520"/>
        <dbReference type="ChEBI" id="CHEBI:456215"/>
        <dbReference type="EC" id="6.1.1.17"/>
    </reaction>
</comment>
<comment type="subcellular location">
    <subcellularLocation>
        <location evidence="1">Cytoplasm</location>
    </subcellularLocation>
</comment>
<comment type="similarity">
    <text evidence="1">Belongs to the class-I aminoacyl-tRNA synthetase family. Glutamate--tRNA ligase type 2 subfamily.</text>
</comment>